<keyword id="KW-0150">Chloroplast</keyword>
<keyword id="KW-0934">Plastid</keyword>
<keyword id="KW-0687">Ribonucleoprotein</keyword>
<keyword id="KW-0689">Ribosomal protein</keyword>
<keyword id="KW-0694">RNA-binding</keyword>
<keyword id="KW-0699">rRNA-binding</keyword>
<keyword id="KW-0809">Transit peptide</keyword>
<accession>P23408</accession>
<organism>
    <name type="scientific">Pisum sativum</name>
    <name type="common">Garden pea</name>
    <name type="synonym">Lathyrus oleraceus</name>
    <dbReference type="NCBI Taxonomy" id="3888"/>
    <lineage>
        <taxon>Eukaryota</taxon>
        <taxon>Viridiplantae</taxon>
        <taxon>Streptophyta</taxon>
        <taxon>Embryophyta</taxon>
        <taxon>Tracheophyta</taxon>
        <taxon>Spermatophyta</taxon>
        <taxon>Magnoliopsida</taxon>
        <taxon>eudicotyledons</taxon>
        <taxon>Gunneridae</taxon>
        <taxon>Pentapetalae</taxon>
        <taxon>rosids</taxon>
        <taxon>fabids</taxon>
        <taxon>Fabales</taxon>
        <taxon>Fabaceae</taxon>
        <taxon>Papilionoideae</taxon>
        <taxon>50 kb inversion clade</taxon>
        <taxon>NPAAA clade</taxon>
        <taxon>Hologalegina</taxon>
        <taxon>IRL clade</taxon>
        <taxon>Fabeae</taxon>
        <taxon>Pisum</taxon>
    </lineage>
</organism>
<comment type="function">
    <text evidence="1">This protein binds specifically to 23S rRNA.</text>
</comment>
<comment type="function">
    <text evidence="1">The globular domain of the protein is located near the polypeptide exit tunnel on the outside of the subunit, while an extended beta-hairpin is found that lines the wall of the exit tunnel in the center of the 70S ribosome.</text>
</comment>
<comment type="subunit">
    <text>Part of the 50S ribosomal subunit.</text>
</comment>
<comment type="subcellular location">
    <subcellularLocation>
        <location>Plastid</location>
        <location>Chloroplast</location>
    </subcellularLocation>
</comment>
<comment type="miscellaneous">
    <text>In legumes L22 is not encoded in the chloroplast but by a nuclear gene.</text>
</comment>
<comment type="similarity">
    <text evidence="2">Belongs to the universal ribosomal protein uL22 family.</text>
</comment>
<feature type="transit peptide" description="Chloroplast">
    <location>
        <begin position="1"/>
        <end status="unknown"/>
    </location>
</feature>
<feature type="chain" id="PRO_0000030486" description="Large ribosomal subunit protein uL22c">
    <location>
        <begin status="unknown"/>
        <end position="204"/>
    </location>
</feature>
<evidence type="ECO:0000250" key="1"/>
<evidence type="ECO:0000305" key="2"/>
<gene>
    <name type="primary">rpl22</name>
</gene>
<dbReference type="EMBL" id="M60952">
    <property type="protein sequence ID" value="AAA33657.1"/>
    <property type="molecule type" value="mRNA"/>
</dbReference>
<dbReference type="EMBL" id="M60951">
    <property type="protein sequence ID" value="AAA33656.1"/>
    <property type="molecule type" value="Genomic_DNA"/>
</dbReference>
<dbReference type="PIR" id="S17314">
    <property type="entry name" value="S17314"/>
</dbReference>
<dbReference type="SMR" id="P23408"/>
<dbReference type="OrthoDB" id="1840754at2759"/>
<dbReference type="GO" id="GO:0009507">
    <property type="term" value="C:chloroplast"/>
    <property type="evidence" value="ECO:0007669"/>
    <property type="project" value="UniProtKB-SubCell"/>
</dbReference>
<dbReference type="GO" id="GO:0015934">
    <property type="term" value="C:large ribosomal subunit"/>
    <property type="evidence" value="ECO:0007669"/>
    <property type="project" value="InterPro"/>
</dbReference>
<dbReference type="GO" id="GO:0019843">
    <property type="term" value="F:rRNA binding"/>
    <property type="evidence" value="ECO:0007669"/>
    <property type="project" value="UniProtKB-KW"/>
</dbReference>
<dbReference type="GO" id="GO:0003735">
    <property type="term" value="F:structural constituent of ribosome"/>
    <property type="evidence" value="ECO:0007669"/>
    <property type="project" value="InterPro"/>
</dbReference>
<dbReference type="GO" id="GO:0006412">
    <property type="term" value="P:translation"/>
    <property type="evidence" value="ECO:0007669"/>
    <property type="project" value="InterPro"/>
</dbReference>
<dbReference type="CDD" id="cd00336">
    <property type="entry name" value="Ribosomal_L22"/>
    <property type="match status" value="1"/>
</dbReference>
<dbReference type="Gene3D" id="3.90.470.10">
    <property type="entry name" value="Ribosomal protein L22/L17"/>
    <property type="match status" value="1"/>
</dbReference>
<dbReference type="HAMAP" id="MF_01331_B">
    <property type="entry name" value="Ribosomal_uL22_B"/>
    <property type="match status" value="1"/>
</dbReference>
<dbReference type="InterPro" id="IPR001063">
    <property type="entry name" value="Ribosomal_uL22"/>
</dbReference>
<dbReference type="InterPro" id="IPR005727">
    <property type="entry name" value="Ribosomal_uL22_bac/chlpt-type"/>
</dbReference>
<dbReference type="InterPro" id="IPR047867">
    <property type="entry name" value="Ribosomal_uL22_bac/org-type"/>
</dbReference>
<dbReference type="InterPro" id="IPR018260">
    <property type="entry name" value="Ribosomal_uL22_CS"/>
</dbReference>
<dbReference type="InterPro" id="IPR036394">
    <property type="entry name" value="Ribosomal_uL22_sf"/>
</dbReference>
<dbReference type="NCBIfam" id="TIGR01044">
    <property type="entry name" value="rplV_bact"/>
    <property type="match status" value="1"/>
</dbReference>
<dbReference type="PANTHER" id="PTHR13501">
    <property type="entry name" value="CHLOROPLAST 50S RIBOSOMAL PROTEIN L22-RELATED"/>
    <property type="match status" value="1"/>
</dbReference>
<dbReference type="PANTHER" id="PTHR13501:SF10">
    <property type="entry name" value="LARGE RIBOSOMAL SUBUNIT PROTEIN UL22M"/>
    <property type="match status" value="1"/>
</dbReference>
<dbReference type="Pfam" id="PF00237">
    <property type="entry name" value="Ribosomal_L22"/>
    <property type="match status" value="1"/>
</dbReference>
<dbReference type="SUPFAM" id="SSF54843">
    <property type="entry name" value="Ribosomal protein L22"/>
    <property type="match status" value="1"/>
</dbReference>
<dbReference type="PROSITE" id="PS00464">
    <property type="entry name" value="RIBOSOMAL_L22"/>
    <property type="match status" value="1"/>
</dbReference>
<name>RK22_PEA</name>
<reference key="1">
    <citation type="journal article" date="1991" name="EMBO J.">
        <title>Transfer of rpl22 to the nucleus greatly preceded its loss from the chloroplast and involved the gain of an intron.</title>
        <authorList>
            <person name="Gantt J.S."/>
            <person name="Baldauf S.L."/>
            <person name="Calie P.J."/>
            <person name="Weeden N.F."/>
            <person name="Palmer J.D."/>
        </authorList>
    </citation>
    <scope>NUCLEOTIDE SEQUENCE [GENOMIC DNA / MRNA]</scope>
</reference>
<proteinExistence type="evidence at transcript level"/>
<sequence length="204" mass="22790">MALSLAINVPPVRDNLLRPQPFQSQFRPNLLKFPIPSSARIRCSSSSSFNDISLKTVTPDNKNSFVCRFNATQLEVQETNQPYAETYAVGRHIRMSADKARRVVDQIRGRPYEASLMVLELMPYRACEAIIKIVFSAGANASHNLGLSKSSLFISKAEVNEGKTLKRVRARAQGRANQILKRTCHITITVRGLPDESDKEENSS</sequence>
<protein>
    <recommendedName>
        <fullName evidence="2">Large ribosomal subunit protein uL22c</fullName>
    </recommendedName>
    <alternativeName>
        <fullName>50S ribosomal protein L22, chloroplastic</fullName>
    </alternativeName>
    <alternativeName>
        <fullName>CL22</fullName>
    </alternativeName>
</protein>